<proteinExistence type="inferred from homology"/>
<comment type="function">
    <text evidence="1">Catalyzes the dephosphorylation of undecaprenyl diphosphate (UPP). Confers resistance to bacitracin.</text>
</comment>
<comment type="catalytic activity">
    <reaction evidence="1">
        <text>di-trans,octa-cis-undecaprenyl diphosphate + H2O = di-trans,octa-cis-undecaprenyl phosphate + phosphate + H(+)</text>
        <dbReference type="Rhea" id="RHEA:28094"/>
        <dbReference type="ChEBI" id="CHEBI:15377"/>
        <dbReference type="ChEBI" id="CHEBI:15378"/>
        <dbReference type="ChEBI" id="CHEBI:43474"/>
        <dbReference type="ChEBI" id="CHEBI:58405"/>
        <dbReference type="ChEBI" id="CHEBI:60392"/>
        <dbReference type="EC" id="3.6.1.27"/>
    </reaction>
</comment>
<comment type="subcellular location">
    <subcellularLocation>
        <location evidence="1">Cell inner membrane</location>
        <topology evidence="1">Multi-pass membrane protein</topology>
    </subcellularLocation>
</comment>
<comment type="miscellaneous">
    <text>Bacitracin is thought to be involved in the inhibition of peptidoglycan synthesis by sequestering undecaprenyl diphosphate, thereby reducing the pool of lipid carrier available.</text>
</comment>
<comment type="similarity">
    <text evidence="1">Belongs to the UppP family.</text>
</comment>
<protein>
    <recommendedName>
        <fullName evidence="1">Undecaprenyl-diphosphatase</fullName>
        <ecNumber evidence="1">3.6.1.27</ecNumber>
    </recommendedName>
    <alternativeName>
        <fullName evidence="1">Bacitracin resistance protein</fullName>
    </alternativeName>
    <alternativeName>
        <fullName evidence="1">Undecaprenyl pyrophosphate phosphatase</fullName>
    </alternativeName>
</protein>
<organism>
    <name type="scientific">Chlorobium chlorochromatii (strain CaD3)</name>
    <dbReference type="NCBI Taxonomy" id="340177"/>
    <lineage>
        <taxon>Bacteria</taxon>
        <taxon>Pseudomonadati</taxon>
        <taxon>Chlorobiota</taxon>
        <taxon>Chlorobiia</taxon>
        <taxon>Chlorobiales</taxon>
        <taxon>Chlorobiaceae</taxon>
        <taxon>Chlorobium/Pelodictyon group</taxon>
        <taxon>Chlorobium</taxon>
    </lineage>
</organism>
<keyword id="KW-0046">Antibiotic resistance</keyword>
<keyword id="KW-0997">Cell inner membrane</keyword>
<keyword id="KW-1003">Cell membrane</keyword>
<keyword id="KW-0133">Cell shape</keyword>
<keyword id="KW-0961">Cell wall biogenesis/degradation</keyword>
<keyword id="KW-0378">Hydrolase</keyword>
<keyword id="KW-0472">Membrane</keyword>
<keyword id="KW-0573">Peptidoglycan synthesis</keyword>
<keyword id="KW-0812">Transmembrane</keyword>
<keyword id="KW-1133">Transmembrane helix</keyword>
<feature type="chain" id="PRO_0000227613" description="Undecaprenyl-diphosphatase">
    <location>
        <begin position="1"/>
        <end position="282"/>
    </location>
</feature>
<feature type="transmembrane region" description="Helical" evidence="1">
    <location>
        <begin position="39"/>
        <end position="59"/>
    </location>
</feature>
<feature type="transmembrane region" description="Helical" evidence="1">
    <location>
        <begin position="85"/>
        <end position="105"/>
    </location>
</feature>
<feature type="transmembrane region" description="Helical" evidence="1">
    <location>
        <begin position="115"/>
        <end position="135"/>
    </location>
</feature>
<feature type="transmembrane region" description="Helical" evidence="1">
    <location>
        <begin position="153"/>
        <end position="173"/>
    </location>
</feature>
<feature type="transmembrane region" description="Helical" evidence="1">
    <location>
        <begin position="196"/>
        <end position="216"/>
    </location>
</feature>
<feature type="transmembrane region" description="Helical" evidence="1">
    <location>
        <begin position="230"/>
        <end position="250"/>
    </location>
</feature>
<feature type="transmembrane region" description="Helical" evidence="1">
    <location>
        <begin position="260"/>
        <end position="280"/>
    </location>
</feature>
<gene>
    <name evidence="1" type="primary">uppP</name>
    <name type="ordered locus">Cag_0482</name>
</gene>
<accession>Q3ATC0</accession>
<name>UPPP_CHLCH</name>
<sequence length="282" mass="30034">MSLFEALILGIVQGLTEFLPISSTAHLRIIPALAGWNDPGAAFTAIVQMGTLAAVLIYFRSDIVCIVKAVVDGLLKGKPLNTPDATMGWMIAAGTIPIVFFGLLFKDAIETTLRSLYWISAALIGLALILWLTEVRLKQRVAKHLPLKSMEEIGWKEALLIGVAQSIALIPGSSRSGTTITGGLLLNLSREAAARFSFLLSLPSVLAAALLQLYETRHSLLASPSELTNLLVATIAAGVVGYASIAFLITYLKEHSTSVFIIYRIVIGVAILGLIATGAIQP</sequence>
<dbReference type="EC" id="3.6.1.27" evidence="1"/>
<dbReference type="EMBL" id="CP000108">
    <property type="protein sequence ID" value="ABB27755.1"/>
    <property type="molecule type" value="Genomic_DNA"/>
</dbReference>
<dbReference type="SMR" id="Q3ATC0"/>
<dbReference type="STRING" id="340177.Cag_0482"/>
<dbReference type="KEGG" id="cch:Cag_0482"/>
<dbReference type="eggNOG" id="COG1968">
    <property type="taxonomic scope" value="Bacteria"/>
</dbReference>
<dbReference type="HOGENOM" id="CLU_060296_1_0_10"/>
<dbReference type="OrthoDB" id="9808289at2"/>
<dbReference type="GO" id="GO:0005886">
    <property type="term" value="C:plasma membrane"/>
    <property type="evidence" value="ECO:0007669"/>
    <property type="project" value="UniProtKB-SubCell"/>
</dbReference>
<dbReference type="GO" id="GO:0050380">
    <property type="term" value="F:undecaprenyl-diphosphatase activity"/>
    <property type="evidence" value="ECO:0007669"/>
    <property type="project" value="UniProtKB-UniRule"/>
</dbReference>
<dbReference type="GO" id="GO:0071555">
    <property type="term" value="P:cell wall organization"/>
    <property type="evidence" value="ECO:0007669"/>
    <property type="project" value="UniProtKB-KW"/>
</dbReference>
<dbReference type="GO" id="GO:0009252">
    <property type="term" value="P:peptidoglycan biosynthetic process"/>
    <property type="evidence" value="ECO:0007669"/>
    <property type="project" value="UniProtKB-KW"/>
</dbReference>
<dbReference type="GO" id="GO:0008360">
    <property type="term" value="P:regulation of cell shape"/>
    <property type="evidence" value="ECO:0007669"/>
    <property type="project" value="UniProtKB-KW"/>
</dbReference>
<dbReference type="GO" id="GO:0046677">
    <property type="term" value="P:response to antibiotic"/>
    <property type="evidence" value="ECO:0007669"/>
    <property type="project" value="UniProtKB-UniRule"/>
</dbReference>
<dbReference type="HAMAP" id="MF_01006">
    <property type="entry name" value="Undec_diphosphatase"/>
    <property type="match status" value="1"/>
</dbReference>
<dbReference type="InterPro" id="IPR003824">
    <property type="entry name" value="UppP"/>
</dbReference>
<dbReference type="NCBIfam" id="TIGR00753">
    <property type="entry name" value="undec_PP_bacA"/>
    <property type="match status" value="1"/>
</dbReference>
<dbReference type="PANTHER" id="PTHR30622">
    <property type="entry name" value="UNDECAPRENYL-DIPHOSPHATASE"/>
    <property type="match status" value="1"/>
</dbReference>
<dbReference type="PANTHER" id="PTHR30622:SF4">
    <property type="entry name" value="UNDECAPRENYL-DIPHOSPHATASE"/>
    <property type="match status" value="1"/>
</dbReference>
<dbReference type="Pfam" id="PF02673">
    <property type="entry name" value="BacA"/>
    <property type="match status" value="1"/>
</dbReference>
<reference key="1">
    <citation type="submission" date="2005-08" db="EMBL/GenBank/DDBJ databases">
        <title>Complete sequence of Chlorobium chlorochromatii CaD3.</title>
        <authorList>
            <consortium name="US DOE Joint Genome Institute"/>
            <person name="Copeland A."/>
            <person name="Lucas S."/>
            <person name="Lapidus A."/>
            <person name="Barry K."/>
            <person name="Detter J.C."/>
            <person name="Glavina T."/>
            <person name="Hammon N."/>
            <person name="Israni S."/>
            <person name="Pitluck S."/>
            <person name="Bryant D."/>
            <person name="Schmutz J."/>
            <person name="Larimer F."/>
            <person name="Land M."/>
            <person name="Kyrpides N."/>
            <person name="Ivanova N."/>
            <person name="Richardson P."/>
        </authorList>
    </citation>
    <scope>NUCLEOTIDE SEQUENCE [LARGE SCALE GENOMIC DNA]</scope>
    <source>
        <strain>CaD3</strain>
    </source>
</reference>
<evidence type="ECO:0000255" key="1">
    <source>
        <dbReference type="HAMAP-Rule" id="MF_01006"/>
    </source>
</evidence>